<name>BBP_DEBHA</name>
<comment type="function">
    <text evidence="1">Necessary for the splicing of pre-mRNA. Has a role in the recognition of the branch site (5'-UACUAAC-3'), the pyrimidine tract and the 3'-splice site at the 3'-end of introns (By similarity).</text>
</comment>
<comment type="subcellular location">
    <subcellularLocation>
        <location evidence="1">Nucleus</location>
    </subcellularLocation>
</comment>
<comment type="similarity">
    <text evidence="5">Belongs to the BBP/SF1 family.</text>
</comment>
<accession>Q6BSP4</accession>
<accession>B5RTE6</accession>
<feature type="chain" id="PRO_0000256148" description="Branchpoint-bridging protein">
    <location>
        <begin position="1"/>
        <end position="518"/>
    </location>
</feature>
<feature type="domain" description="KH" evidence="3">
    <location>
        <begin position="167"/>
        <end position="233"/>
    </location>
</feature>
<feature type="zinc finger region" description="CCHC-type" evidence="2">
    <location>
        <begin position="319"/>
        <end position="336"/>
    </location>
</feature>
<feature type="region of interest" description="Disordered" evidence="4">
    <location>
        <begin position="1"/>
        <end position="47"/>
    </location>
</feature>
<feature type="region of interest" description="Disordered" evidence="4">
    <location>
        <begin position="94"/>
        <end position="124"/>
    </location>
</feature>
<feature type="region of interest" description="Disordered" evidence="4">
    <location>
        <begin position="202"/>
        <end position="241"/>
    </location>
</feature>
<feature type="region of interest" description="Disordered" evidence="4">
    <location>
        <begin position="295"/>
        <end position="314"/>
    </location>
</feature>
<feature type="region of interest" description="Disordered" evidence="4">
    <location>
        <begin position="337"/>
        <end position="518"/>
    </location>
</feature>
<feature type="compositionally biased region" description="Basic and acidic residues" evidence="4">
    <location>
        <begin position="19"/>
        <end position="31"/>
    </location>
</feature>
<feature type="compositionally biased region" description="Low complexity" evidence="4">
    <location>
        <begin position="225"/>
        <end position="240"/>
    </location>
</feature>
<feature type="compositionally biased region" description="Polar residues" evidence="4">
    <location>
        <begin position="340"/>
        <end position="361"/>
    </location>
</feature>
<feature type="compositionally biased region" description="Basic and acidic residues" evidence="4">
    <location>
        <begin position="363"/>
        <end position="381"/>
    </location>
</feature>
<feature type="compositionally biased region" description="Pro residues" evidence="4">
    <location>
        <begin position="408"/>
        <end position="518"/>
    </location>
</feature>
<keyword id="KW-0479">Metal-binding</keyword>
<keyword id="KW-0507">mRNA processing</keyword>
<keyword id="KW-0508">mRNA splicing</keyword>
<keyword id="KW-0539">Nucleus</keyword>
<keyword id="KW-1185">Reference proteome</keyword>
<keyword id="KW-0694">RNA-binding</keyword>
<keyword id="KW-0747">Spliceosome</keyword>
<keyword id="KW-0862">Zinc</keyword>
<keyword id="KW-0863">Zinc-finger</keyword>
<reference key="1">
    <citation type="journal article" date="2004" name="Nature">
        <title>Genome evolution in yeasts.</title>
        <authorList>
            <person name="Dujon B."/>
            <person name="Sherman D."/>
            <person name="Fischer G."/>
            <person name="Durrens P."/>
            <person name="Casaregola S."/>
            <person name="Lafontaine I."/>
            <person name="de Montigny J."/>
            <person name="Marck C."/>
            <person name="Neuveglise C."/>
            <person name="Talla E."/>
            <person name="Goffard N."/>
            <person name="Frangeul L."/>
            <person name="Aigle M."/>
            <person name="Anthouard V."/>
            <person name="Babour A."/>
            <person name="Barbe V."/>
            <person name="Barnay S."/>
            <person name="Blanchin S."/>
            <person name="Beckerich J.-M."/>
            <person name="Beyne E."/>
            <person name="Bleykasten C."/>
            <person name="Boisrame A."/>
            <person name="Boyer J."/>
            <person name="Cattolico L."/>
            <person name="Confanioleri F."/>
            <person name="de Daruvar A."/>
            <person name="Despons L."/>
            <person name="Fabre E."/>
            <person name="Fairhead C."/>
            <person name="Ferry-Dumazet H."/>
            <person name="Groppi A."/>
            <person name="Hantraye F."/>
            <person name="Hennequin C."/>
            <person name="Jauniaux N."/>
            <person name="Joyet P."/>
            <person name="Kachouri R."/>
            <person name="Kerrest A."/>
            <person name="Koszul R."/>
            <person name="Lemaire M."/>
            <person name="Lesur I."/>
            <person name="Ma L."/>
            <person name="Muller H."/>
            <person name="Nicaud J.-M."/>
            <person name="Nikolski M."/>
            <person name="Oztas S."/>
            <person name="Ozier-Kalogeropoulos O."/>
            <person name="Pellenz S."/>
            <person name="Potier S."/>
            <person name="Richard G.-F."/>
            <person name="Straub M.-L."/>
            <person name="Suleau A."/>
            <person name="Swennen D."/>
            <person name="Tekaia F."/>
            <person name="Wesolowski-Louvel M."/>
            <person name="Westhof E."/>
            <person name="Wirth B."/>
            <person name="Zeniou-Meyer M."/>
            <person name="Zivanovic Y."/>
            <person name="Bolotin-Fukuhara M."/>
            <person name="Thierry A."/>
            <person name="Bouchier C."/>
            <person name="Caudron B."/>
            <person name="Scarpelli C."/>
            <person name="Gaillardin C."/>
            <person name="Weissenbach J."/>
            <person name="Wincker P."/>
            <person name="Souciet J.-L."/>
        </authorList>
    </citation>
    <scope>NUCLEOTIDE SEQUENCE [LARGE SCALE GENOMIC DNA]</scope>
    <source>
        <strain>ATCC 36239 / CBS 767 / BCRC 21394 / JCM 1990 / NBRC 0083 / IGC 2968</strain>
    </source>
</reference>
<gene>
    <name type="primary">BBP</name>
    <name type="ordered locus">DEHA2D07238g</name>
</gene>
<evidence type="ECO:0000250" key="1"/>
<evidence type="ECO:0000255" key="2">
    <source>
        <dbReference type="PROSITE-ProRule" id="PRU00047"/>
    </source>
</evidence>
<evidence type="ECO:0000255" key="3">
    <source>
        <dbReference type="PROSITE-ProRule" id="PRU00117"/>
    </source>
</evidence>
<evidence type="ECO:0000256" key="4">
    <source>
        <dbReference type="SAM" id="MobiDB-lite"/>
    </source>
</evidence>
<evidence type="ECO:0000305" key="5"/>
<protein>
    <recommendedName>
        <fullName>Branchpoint-bridging protein</fullName>
    </recommendedName>
</protein>
<organism>
    <name type="scientific">Debaryomyces hansenii (strain ATCC 36239 / CBS 767 / BCRC 21394 / JCM 1990 / NBRC 0083 / IGC 2968)</name>
    <name type="common">Yeast</name>
    <name type="synonym">Torulaspora hansenii</name>
    <dbReference type="NCBI Taxonomy" id="284592"/>
    <lineage>
        <taxon>Eukaryota</taxon>
        <taxon>Fungi</taxon>
        <taxon>Dikarya</taxon>
        <taxon>Ascomycota</taxon>
        <taxon>Saccharomycotina</taxon>
        <taxon>Pichiomycetes</taxon>
        <taxon>Debaryomycetaceae</taxon>
        <taxon>Debaryomyces</taxon>
    </lineage>
</organism>
<dbReference type="EMBL" id="CR382136">
    <property type="protein sequence ID" value="CAR65631.1"/>
    <property type="molecule type" value="Genomic_DNA"/>
</dbReference>
<dbReference type="RefSeq" id="XP_002770275.1">
    <property type="nucleotide sequence ID" value="XM_002770229.1"/>
</dbReference>
<dbReference type="SMR" id="Q6BSP4"/>
<dbReference type="FunCoup" id="Q6BSP4">
    <property type="interactions" value="48"/>
</dbReference>
<dbReference type="STRING" id="284592.Q6BSP4"/>
<dbReference type="GeneID" id="8998483"/>
<dbReference type="KEGG" id="dha:DEHA2D07238g"/>
<dbReference type="VEuPathDB" id="FungiDB:DEHA2D07238g"/>
<dbReference type="eggNOG" id="KOG0119">
    <property type="taxonomic scope" value="Eukaryota"/>
</dbReference>
<dbReference type="HOGENOM" id="CLU_016864_1_1_1"/>
<dbReference type="InParanoid" id="Q6BSP4"/>
<dbReference type="OMA" id="EDSNCKI"/>
<dbReference type="OrthoDB" id="6777263at2759"/>
<dbReference type="Proteomes" id="UP000000599">
    <property type="component" value="Chromosome D"/>
</dbReference>
<dbReference type="GO" id="GO:0005681">
    <property type="term" value="C:spliceosomal complex"/>
    <property type="evidence" value="ECO:0007669"/>
    <property type="project" value="UniProtKB-KW"/>
</dbReference>
<dbReference type="GO" id="GO:0003729">
    <property type="term" value="F:mRNA binding"/>
    <property type="evidence" value="ECO:0007669"/>
    <property type="project" value="TreeGrafter"/>
</dbReference>
<dbReference type="GO" id="GO:0008270">
    <property type="term" value="F:zinc ion binding"/>
    <property type="evidence" value="ECO:0007669"/>
    <property type="project" value="UniProtKB-KW"/>
</dbReference>
<dbReference type="GO" id="GO:0006397">
    <property type="term" value="P:mRNA processing"/>
    <property type="evidence" value="ECO:0007669"/>
    <property type="project" value="UniProtKB-KW"/>
</dbReference>
<dbReference type="GO" id="GO:0048024">
    <property type="term" value="P:regulation of mRNA splicing, via spliceosome"/>
    <property type="evidence" value="ECO:0007669"/>
    <property type="project" value="TreeGrafter"/>
</dbReference>
<dbReference type="GO" id="GO:0008380">
    <property type="term" value="P:RNA splicing"/>
    <property type="evidence" value="ECO:0007669"/>
    <property type="project" value="UniProtKB-KW"/>
</dbReference>
<dbReference type="CDD" id="cd02395">
    <property type="entry name" value="KH-I_BBP"/>
    <property type="match status" value="1"/>
</dbReference>
<dbReference type="Gene3D" id="6.10.140.1790">
    <property type="match status" value="1"/>
</dbReference>
<dbReference type="Gene3D" id="3.30.1370.10">
    <property type="entry name" value="K Homology domain, type 1"/>
    <property type="match status" value="1"/>
</dbReference>
<dbReference type="Gene3D" id="4.10.60.10">
    <property type="entry name" value="Zinc finger, CCHC-type"/>
    <property type="match status" value="1"/>
</dbReference>
<dbReference type="InterPro" id="IPR045071">
    <property type="entry name" value="BBP-like"/>
</dbReference>
<dbReference type="InterPro" id="IPR055256">
    <property type="entry name" value="KH_1_KHDC4/BBP-like"/>
</dbReference>
<dbReference type="InterPro" id="IPR004087">
    <property type="entry name" value="KH_dom"/>
</dbReference>
<dbReference type="InterPro" id="IPR036612">
    <property type="entry name" value="KH_dom_type_1_sf"/>
</dbReference>
<dbReference type="InterPro" id="IPR032570">
    <property type="entry name" value="SF1-HH"/>
</dbReference>
<dbReference type="InterPro" id="IPR047086">
    <property type="entry name" value="SF1-HH_sf"/>
</dbReference>
<dbReference type="InterPro" id="IPR001878">
    <property type="entry name" value="Znf_CCHC"/>
</dbReference>
<dbReference type="InterPro" id="IPR036875">
    <property type="entry name" value="Znf_CCHC_sf"/>
</dbReference>
<dbReference type="PANTHER" id="PTHR11208">
    <property type="entry name" value="RNA-BINDING PROTEIN RELATED"/>
    <property type="match status" value="1"/>
</dbReference>
<dbReference type="PANTHER" id="PTHR11208:SF45">
    <property type="entry name" value="SPLICING FACTOR 1"/>
    <property type="match status" value="1"/>
</dbReference>
<dbReference type="Pfam" id="PF22675">
    <property type="entry name" value="KH-I_KHDC4-BBP"/>
    <property type="match status" value="1"/>
</dbReference>
<dbReference type="Pfam" id="PF16275">
    <property type="entry name" value="SF1-HH"/>
    <property type="match status" value="1"/>
</dbReference>
<dbReference type="Pfam" id="PF00098">
    <property type="entry name" value="zf-CCHC"/>
    <property type="match status" value="1"/>
</dbReference>
<dbReference type="SMART" id="SM00322">
    <property type="entry name" value="KH"/>
    <property type="match status" value="1"/>
</dbReference>
<dbReference type="SMART" id="SM00343">
    <property type="entry name" value="ZnF_C2HC"/>
    <property type="match status" value="1"/>
</dbReference>
<dbReference type="SUPFAM" id="SSF54791">
    <property type="entry name" value="Eukaryotic type KH-domain (KH-domain type I)"/>
    <property type="match status" value="1"/>
</dbReference>
<dbReference type="SUPFAM" id="SSF57756">
    <property type="entry name" value="Retrovirus zinc finger-like domains"/>
    <property type="match status" value="1"/>
</dbReference>
<dbReference type="PROSITE" id="PS50084">
    <property type="entry name" value="KH_TYPE_1"/>
    <property type="match status" value="1"/>
</dbReference>
<dbReference type="PROSITE" id="PS50158">
    <property type="entry name" value="ZF_CCHC"/>
    <property type="match status" value="1"/>
</dbReference>
<proteinExistence type="inferred from homology"/>
<sequence>MSAYSRRYTDGPSNYGQDVRGRSEKKVEASHTTKWSGTPSRHKKIGKEDFDTIVTGHLTQEQMDAYQQYFRIEEISDILRMASESQSEVLSLLPSGNIANNPNYEREPSPPPKYDAAGNRSNTREARTKLALEKERHYLVEVAAGSIKNYMSPIDYRKPVKTYEKIYIPVKDYPDINFVGLLLGPRGNTLRQLQEDSGARLAIRGKGSVKDGKSTSSNNDDDDSNSSLSFSNPNLNSSGNDDLHVVITSDSQSKIAKAIKLTNQVIEKAISSPVGQNDLKRGQLRELAILNGTLRETKPYNPETQQSRRSRPGLDVSQLVCKSCGKVGHFARDCKFRGTSDGNNNPIVQDQADSYQQTAPYSDSRRQREEEDPRNNGREEILPPWKKKKPNVPLPPWQKPQQPLPSTDAPPPPVGLAPPPSSLAPPPPPPSSLAPPPPPPPSSLAPPPPPSSDIAPPPPSSDRAPPPPPSGIAPPPPPSGIAPPPPKSPNGVAPPPPPANDAPPAPSSTKNPPPPPPA</sequence>